<protein>
    <recommendedName>
        <fullName>Transcription factor bHLH34</fullName>
    </recommendedName>
    <alternativeName>
        <fullName>Basic helix-loop-helix protein 34</fullName>
        <shortName>AtbHLH34</shortName>
        <shortName>bHLH 34</shortName>
    </alternativeName>
    <alternativeName>
        <fullName>Transcription factor EN 135</fullName>
    </alternativeName>
    <alternativeName>
        <fullName>bHLH transcription factor bHLH034</fullName>
    </alternativeName>
</protein>
<comment type="subunit">
    <text evidence="4">Homodimer.</text>
</comment>
<comment type="subcellular location">
    <subcellularLocation>
        <location evidence="1">Nucleus</location>
    </subcellularLocation>
</comment>
<comment type="tissue specificity">
    <text evidence="3">Expressed constitutively in roots, leaves, stems, and flowers.</text>
</comment>
<name>BH034_ARATH</name>
<reference key="1">
    <citation type="journal article" date="2000" name="DNA Res.">
        <title>Structural analysis of Arabidopsis thaliana chromosome 3. I. Sequence features of the regions of 4,504,864 bp covered by sixty P1 and TAC clones.</title>
        <authorList>
            <person name="Sato S."/>
            <person name="Nakamura Y."/>
            <person name="Kaneko T."/>
            <person name="Katoh T."/>
            <person name="Asamizu E."/>
            <person name="Tabata S."/>
        </authorList>
    </citation>
    <scope>NUCLEOTIDE SEQUENCE [LARGE SCALE GENOMIC DNA]</scope>
    <source>
        <strain>cv. Columbia</strain>
    </source>
</reference>
<reference key="2">
    <citation type="journal article" date="2017" name="Plant J.">
        <title>Araport11: a complete reannotation of the Arabidopsis thaliana reference genome.</title>
        <authorList>
            <person name="Cheng C.Y."/>
            <person name="Krishnakumar V."/>
            <person name="Chan A.P."/>
            <person name="Thibaud-Nissen F."/>
            <person name="Schobel S."/>
            <person name="Town C.D."/>
        </authorList>
    </citation>
    <scope>GENOME REANNOTATION</scope>
    <source>
        <strain>cv. Columbia</strain>
    </source>
</reference>
<reference key="3">
    <citation type="journal article" date="2003" name="Science">
        <title>Empirical analysis of transcriptional activity in the Arabidopsis genome.</title>
        <authorList>
            <person name="Yamada K."/>
            <person name="Lim J."/>
            <person name="Dale J.M."/>
            <person name="Chen H."/>
            <person name="Shinn P."/>
            <person name="Palm C.J."/>
            <person name="Southwick A.M."/>
            <person name="Wu H.C."/>
            <person name="Kim C.J."/>
            <person name="Nguyen M."/>
            <person name="Pham P.K."/>
            <person name="Cheuk R.F."/>
            <person name="Karlin-Newmann G."/>
            <person name="Liu S.X."/>
            <person name="Lam B."/>
            <person name="Sakano H."/>
            <person name="Wu T."/>
            <person name="Yu G."/>
            <person name="Miranda M."/>
            <person name="Quach H.L."/>
            <person name="Tripp M."/>
            <person name="Chang C.H."/>
            <person name="Lee J.M."/>
            <person name="Toriumi M.J."/>
            <person name="Chan M.M."/>
            <person name="Tang C.C."/>
            <person name="Onodera C.S."/>
            <person name="Deng J.M."/>
            <person name="Akiyama K."/>
            <person name="Ansari Y."/>
            <person name="Arakawa T."/>
            <person name="Banh J."/>
            <person name="Banno F."/>
            <person name="Bowser L."/>
            <person name="Brooks S.Y."/>
            <person name="Carninci P."/>
            <person name="Chao Q."/>
            <person name="Choy N."/>
            <person name="Enju A."/>
            <person name="Goldsmith A.D."/>
            <person name="Gurjal M."/>
            <person name="Hansen N.F."/>
            <person name="Hayashizaki Y."/>
            <person name="Johnson-Hopson C."/>
            <person name="Hsuan V.W."/>
            <person name="Iida K."/>
            <person name="Karnes M."/>
            <person name="Khan S."/>
            <person name="Koesema E."/>
            <person name="Ishida J."/>
            <person name="Jiang P.X."/>
            <person name="Jones T."/>
            <person name="Kawai J."/>
            <person name="Kamiya A."/>
            <person name="Meyers C."/>
            <person name="Nakajima M."/>
            <person name="Narusaka M."/>
            <person name="Seki M."/>
            <person name="Sakurai T."/>
            <person name="Satou M."/>
            <person name="Tamse R."/>
            <person name="Vaysberg M."/>
            <person name="Wallender E.K."/>
            <person name="Wong C."/>
            <person name="Yamamura Y."/>
            <person name="Yuan S."/>
            <person name="Shinozaki K."/>
            <person name="Davis R.W."/>
            <person name="Theologis A."/>
            <person name="Ecker J.R."/>
        </authorList>
    </citation>
    <scope>NUCLEOTIDE SEQUENCE [LARGE SCALE MRNA]</scope>
    <source>
        <strain>cv. Columbia</strain>
    </source>
</reference>
<reference key="4">
    <citation type="journal article" date="2003" name="Mol. Biol. Evol.">
        <title>The basic helix-loop-helix transcription factor family in plants: a genome-wide study of protein structure and functional diversity.</title>
        <authorList>
            <person name="Heim M.A."/>
            <person name="Jakoby M."/>
            <person name="Werber M."/>
            <person name="Martin C."/>
            <person name="Weisshaar B."/>
            <person name="Bailey P.C."/>
        </authorList>
    </citation>
    <scope>NUCLEOTIDE SEQUENCE [MRNA] OF 30-320</scope>
    <scope>TISSUE SPECIFICITY</scope>
    <scope>GENE FAMILY</scope>
    <scope>NOMENCLATURE</scope>
    <source>
        <strain>cv. Columbia</strain>
        <tissue>Flower</tissue>
    </source>
</reference>
<reference key="5">
    <citation type="journal article" date="2003" name="Plant Cell">
        <title>The Arabidopsis basic/helix-loop-helix transcription factor family.</title>
        <authorList>
            <person name="Toledo-Ortiz G."/>
            <person name="Huq E."/>
            <person name="Quail P.H."/>
        </authorList>
    </citation>
    <scope>GENE FAMILY</scope>
</reference>
<reference key="6">
    <citation type="journal article" date="2003" name="Plant Cell">
        <title>Update on the basic helix-loop-helix transcription factor gene family in Arabidopsis thaliana.</title>
        <authorList>
            <person name="Bailey P.C."/>
            <person name="Martin C."/>
            <person name="Toledo-Ortiz G."/>
            <person name="Quail P.H."/>
            <person name="Huq E."/>
            <person name="Heim M.A."/>
            <person name="Jakoby M."/>
            <person name="Werber M."/>
            <person name="Weisshaar B."/>
        </authorList>
    </citation>
    <scope>GENE FAMILY</scope>
    <scope>NOMENCLATURE</scope>
</reference>
<sequence length="320" mass="35577">MYPSIEDDDDLLAALCFDQSNGVEDPYGYMQTNEDNIFQDFGSCGVNLMQPQQEQFDSFNGNLEQVCSSFRGGNNGVVYSSSIGSAQLDLAASFSGVLQQETHQVCGFRGQNDDSAVPHLQQQQGQVFSGVVEINSSSSVGAVKEEFEEECSGKRRRTGSCSKPGTKACREKLRREKLNDKFMDLSSVLEPGRTPKTDKSAILDDAIRVVNQLRGEAHELQETNQKLLEEIKSLKADKNELREEKLVLKAEKEKMEQQLKSMVVPSPGFMPSQHPAAFHSHKMAVAYPYGYYPPNMPMWSPLPPADRDTSRDLKNLPPVA</sequence>
<gene>
    <name type="primary">BHLH34</name>
    <name type="synonym">EN135</name>
    <name type="ordered locus">At3g23210</name>
    <name type="ORF">K14B15.12</name>
</gene>
<evidence type="ECO:0000255" key="1">
    <source>
        <dbReference type="PROSITE-ProRule" id="PRU00981"/>
    </source>
</evidence>
<evidence type="ECO:0000256" key="2">
    <source>
        <dbReference type="SAM" id="MobiDB-lite"/>
    </source>
</evidence>
<evidence type="ECO:0000269" key="3">
    <source>
    </source>
</evidence>
<evidence type="ECO:0000305" key="4"/>
<accession>Q9LTC7</accession>
<accession>Q8S3E8</accession>
<dbReference type="EMBL" id="AB025608">
    <property type="protein sequence ID" value="BAA95734.1"/>
    <property type="molecule type" value="Genomic_DNA"/>
</dbReference>
<dbReference type="EMBL" id="CP002686">
    <property type="protein sequence ID" value="AEE76735.1"/>
    <property type="molecule type" value="Genomic_DNA"/>
</dbReference>
<dbReference type="EMBL" id="AY099674">
    <property type="protein sequence ID" value="AAM20525.1"/>
    <property type="molecule type" value="mRNA"/>
</dbReference>
<dbReference type="EMBL" id="AY128853">
    <property type="protein sequence ID" value="AAM91253.1"/>
    <property type="molecule type" value="mRNA"/>
</dbReference>
<dbReference type="EMBL" id="AF488573">
    <property type="protein sequence ID" value="AAM10939.1"/>
    <property type="molecule type" value="mRNA"/>
</dbReference>
<dbReference type="RefSeq" id="NP_001327796.1">
    <property type="nucleotide sequence ID" value="NM_001338621.1"/>
</dbReference>
<dbReference type="RefSeq" id="NP_188962.2">
    <property type="nucleotide sequence ID" value="NM_113222.5"/>
</dbReference>
<dbReference type="SMR" id="Q9LTC7"/>
<dbReference type="BioGRID" id="7231">
    <property type="interactions" value="1"/>
</dbReference>
<dbReference type="FunCoup" id="Q9LTC7">
    <property type="interactions" value="152"/>
</dbReference>
<dbReference type="IntAct" id="Q9LTC7">
    <property type="interactions" value="1"/>
</dbReference>
<dbReference type="STRING" id="3702.Q9LTC7"/>
<dbReference type="PaxDb" id="3702-AT3G23210.1"/>
<dbReference type="EnsemblPlants" id="AT3G23210.1">
    <property type="protein sequence ID" value="AT3G23210.1"/>
    <property type="gene ID" value="AT3G23210"/>
</dbReference>
<dbReference type="GeneID" id="821899"/>
<dbReference type="Gramene" id="AT3G23210.1">
    <property type="protein sequence ID" value="AT3G23210.1"/>
    <property type="gene ID" value="AT3G23210"/>
</dbReference>
<dbReference type="KEGG" id="ath:AT3G23210"/>
<dbReference type="Araport" id="AT3G23210"/>
<dbReference type="TAIR" id="AT3G23210">
    <property type="gene designation" value="BHLH34"/>
</dbReference>
<dbReference type="eggNOG" id="ENOG502RXAH">
    <property type="taxonomic scope" value="Eukaryota"/>
</dbReference>
<dbReference type="HOGENOM" id="CLU_869720_0_0_1"/>
<dbReference type="InParanoid" id="Q9LTC7"/>
<dbReference type="OrthoDB" id="515493at2759"/>
<dbReference type="PhylomeDB" id="Q9LTC7"/>
<dbReference type="PRO" id="PR:Q9LTC7"/>
<dbReference type="Proteomes" id="UP000006548">
    <property type="component" value="Chromosome 3"/>
</dbReference>
<dbReference type="ExpressionAtlas" id="Q9LTC7">
    <property type="expression patterns" value="baseline and differential"/>
</dbReference>
<dbReference type="GO" id="GO:0005634">
    <property type="term" value="C:nucleus"/>
    <property type="evidence" value="ECO:0000314"/>
    <property type="project" value="TAIR"/>
</dbReference>
<dbReference type="GO" id="GO:0003700">
    <property type="term" value="F:DNA-binding transcription factor activity"/>
    <property type="evidence" value="ECO:0000250"/>
    <property type="project" value="TAIR"/>
</dbReference>
<dbReference type="GO" id="GO:0046983">
    <property type="term" value="F:protein dimerization activity"/>
    <property type="evidence" value="ECO:0007669"/>
    <property type="project" value="InterPro"/>
</dbReference>
<dbReference type="GO" id="GO:0043565">
    <property type="term" value="F:sequence-specific DNA binding"/>
    <property type="evidence" value="ECO:0000314"/>
    <property type="project" value="TAIR"/>
</dbReference>
<dbReference type="GO" id="GO:0000976">
    <property type="term" value="F:transcription cis-regulatory region binding"/>
    <property type="evidence" value="ECO:0000353"/>
    <property type="project" value="TAIR"/>
</dbReference>
<dbReference type="GO" id="GO:0071333">
    <property type="term" value="P:cellular response to glucose stimulus"/>
    <property type="evidence" value="ECO:0000315"/>
    <property type="project" value="TAIR"/>
</dbReference>
<dbReference type="GO" id="GO:0006879">
    <property type="term" value="P:intracellular iron ion homeostasis"/>
    <property type="evidence" value="ECO:0007669"/>
    <property type="project" value="InterPro"/>
</dbReference>
<dbReference type="GO" id="GO:0010030">
    <property type="term" value="P:positive regulation of seed germination"/>
    <property type="evidence" value="ECO:0000316"/>
    <property type="project" value="TAIR"/>
</dbReference>
<dbReference type="GO" id="GO:0006355">
    <property type="term" value="P:regulation of DNA-templated transcription"/>
    <property type="evidence" value="ECO:0000304"/>
    <property type="project" value="TAIR"/>
</dbReference>
<dbReference type="CDD" id="cd11446">
    <property type="entry name" value="bHLH_AtILR3_like"/>
    <property type="match status" value="1"/>
</dbReference>
<dbReference type="FunFam" id="4.10.280.10:FF:000165">
    <property type="entry name" value="Transcription factor bHLH104"/>
    <property type="match status" value="1"/>
</dbReference>
<dbReference type="Gene3D" id="4.10.280.10">
    <property type="entry name" value="Helix-loop-helix DNA-binding domain"/>
    <property type="match status" value="1"/>
</dbReference>
<dbReference type="InterPro" id="IPR011598">
    <property type="entry name" value="bHLH_dom"/>
</dbReference>
<dbReference type="InterPro" id="IPR036638">
    <property type="entry name" value="HLH_DNA-bd_sf"/>
</dbReference>
<dbReference type="InterPro" id="IPR044818">
    <property type="entry name" value="ILR3-like"/>
</dbReference>
<dbReference type="PANTHER" id="PTHR46133">
    <property type="entry name" value="BHLH TRANSCRIPTION FACTOR"/>
    <property type="match status" value="1"/>
</dbReference>
<dbReference type="PANTHER" id="PTHR46133:SF7">
    <property type="entry name" value="TRANSCRIPTION FACTOR BHLH34"/>
    <property type="match status" value="1"/>
</dbReference>
<dbReference type="Pfam" id="PF00010">
    <property type="entry name" value="HLH"/>
    <property type="match status" value="1"/>
</dbReference>
<dbReference type="SMART" id="SM00353">
    <property type="entry name" value="HLH"/>
    <property type="match status" value="1"/>
</dbReference>
<dbReference type="SUPFAM" id="SSF47459">
    <property type="entry name" value="HLH, helix-loop-helix DNA-binding domain"/>
    <property type="match status" value="1"/>
</dbReference>
<dbReference type="PROSITE" id="PS50888">
    <property type="entry name" value="BHLH"/>
    <property type="match status" value="1"/>
</dbReference>
<organism>
    <name type="scientific">Arabidopsis thaliana</name>
    <name type="common">Mouse-ear cress</name>
    <dbReference type="NCBI Taxonomy" id="3702"/>
    <lineage>
        <taxon>Eukaryota</taxon>
        <taxon>Viridiplantae</taxon>
        <taxon>Streptophyta</taxon>
        <taxon>Embryophyta</taxon>
        <taxon>Tracheophyta</taxon>
        <taxon>Spermatophyta</taxon>
        <taxon>Magnoliopsida</taxon>
        <taxon>eudicotyledons</taxon>
        <taxon>Gunneridae</taxon>
        <taxon>Pentapetalae</taxon>
        <taxon>rosids</taxon>
        <taxon>malvids</taxon>
        <taxon>Brassicales</taxon>
        <taxon>Brassicaceae</taxon>
        <taxon>Camelineae</taxon>
        <taxon>Arabidopsis</taxon>
    </lineage>
</organism>
<keyword id="KW-0238">DNA-binding</keyword>
<keyword id="KW-0539">Nucleus</keyword>
<keyword id="KW-1185">Reference proteome</keyword>
<keyword id="KW-0804">Transcription</keyword>
<keyword id="KW-0805">Transcription regulation</keyword>
<proteinExistence type="evidence at transcript level"/>
<feature type="chain" id="PRO_0000358741" description="Transcription factor bHLH34">
    <location>
        <begin position="1"/>
        <end position="320"/>
    </location>
</feature>
<feature type="domain" description="bHLH" evidence="1">
    <location>
        <begin position="162"/>
        <end position="213"/>
    </location>
</feature>
<feature type="region of interest" description="Disordered" evidence="2">
    <location>
        <begin position="299"/>
        <end position="320"/>
    </location>
</feature>
<feature type="compositionally biased region" description="Basic and acidic residues" evidence="2">
    <location>
        <begin position="305"/>
        <end position="314"/>
    </location>
</feature>